<protein>
    <recommendedName>
        <fullName>Histone H2A</fullName>
    </recommendedName>
</protein>
<sequence>MTGGKSGGKASGSKNAQSRSSKAGLAFPVGRVHRLLRKGNYAQRVGAGAPVYLAAVLEYLAAEILELAGNAARDNKKTRIIPRHLQLAIRNDEELNKLLGHVTIAQGGVLPNIHQNLLPKKTPKAGKGSQEL</sequence>
<organism>
    <name type="scientific">Emericella nidulans (strain FGSC A4 / ATCC 38163 / CBS 112.46 / NRRL 194 / M139)</name>
    <name type="common">Aspergillus nidulans</name>
    <dbReference type="NCBI Taxonomy" id="227321"/>
    <lineage>
        <taxon>Eukaryota</taxon>
        <taxon>Fungi</taxon>
        <taxon>Dikarya</taxon>
        <taxon>Ascomycota</taxon>
        <taxon>Pezizomycotina</taxon>
        <taxon>Eurotiomycetes</taxon>
        <taxon>Eurotiomycetidae</taxon>
        <taxon>Eurotiales</taxon>
        <taxon>Aspergillaceae</taxon>
        <taxon>Aspergillus</taxon>
        <taxon>Aspergillus subgen. Nidulantes</taxon>
    </lineage>
</organism>
<gene>
    <name type="primary">htaA</name>
    <name type="synonym">hta1</name>
    <name type="ORF">AN3468</name>
</gene>
<evidence type="ECO:0000250" key="1"/>
<evidence type="ECO:0000256" key="2">
    <source>
        <dbReference type="SAM" id="MobiDB-lite"/>
    </source>
</evidence>
<evidence type="ECO:0000305" key="3"/>
<reference key="1">
    <citation type="journal article" date="1987" name="Gene">
        <title>The unique histone H2A gene of Aspergillus nidulans contains three introns.</title>
        <authorList>
            <person name="May G.S."/>
            <person name="Morris N.R."/>
        </authorList>
    </citation>
    <scope>NUCLEOTIDE SEQUENCE [GENOMIC DNA]</scope>
    <source>
        <strain>R153</strain>
    </source>
</reference>
<reference key="2">
    <citation type="journal article" date="2005" name="Nature">
        <title>Sequencing of Aspergillus nidulans and comparative analysis with A. fumigatus and A. oryzae.</title>
        <authorList>
            <person name="Galagan J.E."/>
            <person name="Calvo S.E."/>
            <person name="Cuomo C."/>
            <person name="Ma L.-J."/>
            <person name="Wortman J.R."/>
            <person name="Batzoglou S."/>
            <person name="Lee S.-I."/>
            <person name="Bastuerkmen M."/>
            <person name="Spevak C.C."/>
            <person name="Clutterbuck J."/>
            <person name="Kapitonov V."/>
            <person name="Jurka J."/>
            <person name="Scazzocchio C."/>
            <person name="Farman M.L."/>
            <person name="Butler J."/>
            <person name="Purcell S."/>
            <person name="Harris S."/>
            <person name="Braus G.H."/>
            <person name="Draht O."/>
            <person name="Busch S."/>
            <person name="D'Enfert C."/>
            <person name="Bouchier C."/>
            <person name="Goldman G.H."/>
            <person name="Bell-Pedersen D."/>
            <person name="Griffiths-Jones S."/>
            <person name="Doonan J.H."/>
            <person name="Yu J."/>
            <person name="Vienken K."/>
            <person name="Pain A."/>
            <person name="Freitag M."/>
            <person name="Selker E.U."/>
            <person name="Archer D.B."/>
            <person name="Penalva M.A."/>
            <person name="Oakley B.R."/>
            <person name="Momany M."/>
            <person name="Tanaka T."/>
            <person name="Kumagai T."/>
            <person name="Asai K."/>
            <person name="Machida M."/>
            <person name="Nierman W.C."/>
            <person name="Denning D.W."/>
            <person name="Caddick M.X."/>
            <person name="Hynes M."/>
            <person name="Paoletti M."/>
            <person name="Fischer R."/>
            <person name="Miller B.L."/>
            <person name="Dyer P.S."/>
            <person name="Sachs M.S."/>
            <person name="Osmani S.A."/>
            <person name="Birren B.W."/>
        </authorList>
    </citation>
    <scope>NUCLEOTIDE SEQUENCE [LARGE SCALE GENOMIC DNA]</scope>
    <source>
        <strain>FGSC A4 / ATCC 38163 / CBS 112.46 / NRRL 194 / M139</strain>
    </source>
</reference>
<reference key="3">
    <citation type="journal article" date="2009" name="Fungal Genet. Biol.">
        <title>The 2008 update of the Aspergillus nidulans genome annotation: a community effort.</title>
        <authorList>
            <person name="Wortman J.R."/>
            <person name="Gilsenan J.M."/>
            <person name="Joardar V."/>
            <person name="Deegan J."/>
            <person name="Clutterbuck J."/>
            <person name="Andersen M.R."/>
            <person name="Archer D."/>
            <person name="Bencina M."/>
            <person name="Braus G."/>
            <person name="Coutinho P."/>
            <person name="von Dohren H."/>
            <person name="Doonan J."/>
            <person name="Driessen A.J."/>
            <person name="Durek P."/>
            <person name="Espeso E."/>
            <person name="Fekete E."/>
            <person name="Flipphi M."/>
            <person name="Estrada C.G."/>
            <person name="Geysens S."/>
            <person name="Goldman G."/>
            <person name="de Groot P.W."/>
            <person name="Hansen K."/>
            <person name="Harris S.D."/>
            <person name="Heinekamp T."/>
            <person name="Helmstaedt K."/>
            <person name="Henrissat B."/>
            <person name="Hofmann G."/>
            <person name="Homan T."/>
            <person name="Horio T."/>
            <person name="Horiuchi H."/>
            <person name="James S."/>
            <person name="Jones M."/>
            <person name="Karaffa L."/>
            <person name="Karanyi Z."/>
            <person name="Kato M."/>
            <person name="Keller N."/>
            <person name="Kelly D.E."/>
            <person name="Kiel J.A."/>
            <person name="Kim J.M."/>
            <person name="van der Klei I.J."/>
            <person name="Klis F.M."/>
            <person name="Kovalchuk A."/>
            <person name="Krasevec N."/>
            <person name="Kubicek C.P."/>
            <person name="Liu B."/>
            <person name="Maccabe A."/>
            <person name="Meyer V."/>
            <person name="Mirabito P."/>
            <person name="Miskei M."/>
            <person name="Mos M."/>
            <person name="Mullins J."/>
            <person name="Nelson D.R."/>
            <person name="Nielsen J."/>
            <person name="Oakley B.R."/>
            <person name="Osmani S.A."/>
            <person name="Pakula T."/>
            <person name="Paszewski A."/>
            <person name="Paulsen I."/>
            <person name="Pilsyk S."/>
            <person name="Pocsi I."/>
            <person name="Punt P.J."/>
            <person name="Ram A.F."/>
            <person name="Ren Q."/>
            <person name="Robellet X."/>
            <person name="Robson G."/>
            <person name="Seiboth B."/>
            <person name="van Solingen P."/>
            <person name="Specht T."/>
            <person name="Sun J."/>
            <person name="Taheri-Talesh N."/>
            <person name="Takeshita N."/>
            <person name="Ussery D."/>
            <person name="vanKuyk P.A."/>
            <person name="Visser H."/>
            <person name="van de Vondervoort P.J."/>
            <person name="de Vries R.P."/>
            <person name="Walton J."/>
            <person name="Xiang X."/>
            <person name="Xiong Y."/>
            <person name="Zeng A.P."/>
            <person name="Brandt B.W."/>
            <person name="Cornell M.J."/>
            <person name="van den Hondel C.A."/>
            <person name="Visser J."/>
            <person name="Oliver S.G."/>
            <person name="Turner G."/>
        </authorList>
    </citation>
    <scope>GENOME REANNOTATION</scope>
    <source>
        <strain>FGSC A4 / ATCC 38163 / CBS 112.46 / NRRL 194 / M139</strain>
    </source>
</reference>
<proteinExistence type="inferred from homology"/>
<name>H2A_EMENI</name>
<accession>P08844</accession>
<accession>C8VH97</accession>
<accession>Q5B7L2</accession>
<dbReference type="EMBL" id="M18258">
    <property type="protein sequence ID" value="AAA33309.1"/>
    <property type="molecule type" value="Genomic_DNA"/>
</dbReference>
<dbReference type="EMBL" id="AACD01000058">
    <property type="protein sequence ID" value="EAA63008.1"/>
    <property type="molecule type" value="Genomic_DNA"/>
</dbReference>
<dbReference type="EMBL" id="BN001306">
    <property type="protein sequence ID" value="CBF82646.1"/>
    <property type="molecule type" value="Genomic_DNA"/>
</dbReference>
<dbReference type="PIR" id="A27332">
    <property type="entry name" value="A27332"/>
</dbReference>
<dbReference type="RefSeq" id="XP_661072.1">
    <property type="nucleotide sequence ID" value="XM_655980.1"/>
</dbReference>
<dbReference type="SMR" id="P08844"/>
<dbReference type="FunCoup" id="P08844">
    <property type="interactions" value="972"/>
</dbReference>
<dbReference type="STRING" id="227321.P08844"/>
<dbReference type="EnsemblFungi" id="CBF82646">
    <property type="protein sequence ID" value="CBF82646"/>
    <property type="gene ID" value="ANIA_03468"/>
</dbReference>
<dbReference type="KEGG" id="ani:ANIA_03468"/>
<dbReference type="VEuPathDB" id="FungiDB:AN3468"/>
<dbReference type="eggNOG" id="KOG1756">
    <property type="taxonomic scope" value="Eukaryota"/>
</dbReference>
<dbReference type="HOGENOM" id="CLU_062828_3_0_1"/>
<dbReference type="InParanoid" id="P08844"/>
<dbReference type="OMA" id="CALESQH"/>
<dbReference type="OrthoDB" id="9421954at2759"/>
<dbReference type="Proteomes" id="UP000000560">
    <property type="component" value="Chromosome VI"/>
</dbReference>
<dbReference type="GO" id="GO:0000786">
    <property type="term" value="C:nucleosome"/>
    <property type="evidence" value="ECO:0000318"/>
    <property type="project" value="GO_Central"/>
</dbReference>
<dbReference type="GO" id="GO:0005634">
    <property type="term" value="C:nucleus"/>
    <property type="evidence" value="ECO:0000314"/>
    <property type="project" value="AspGD"/>
</dbReference>
<dbReference type="GO" id="GO:0003677">
    <property type="term" value="F:DNA binding"/>
    <property type="evidence" value="ECO:0007669"/>
    <property type="project" value="UniProtKB-KW"/>
</dbReference>
<dbReference type="GO" id="GO:0046982">
    <property type="term" value="F:protein heterodimerization activity"/>
    <property type="evidence" value="ECO:0007669"/>
    <property type="project" value="InterPro"/>
</dbReference>
<dbReference type="GO" id="GO:0030527">
    <property type="term" value="F:structural constituent of chromatin"/>
    <property type="evidence" value="ECO:0000318"/>
    <property type="project" value="GO_Central"/>
</dbReference>
<dbReference type="GO" id="GO:0006281">
    <property type="term" value="P:DNA repair"/>
    <property type="evidence" value="ECO:0007669"/>
    <property type="project" value="UniProtKB-KW"/>
</dbReference>
<dbReference type="GO" id="GO:0031507">
    <property type="term" value="P:heterochromatin formation"/>
    <property type="evidence" value="ECO:0000318"/>
    <property type="project" value="GO_Central"/>
</dbReference>
<dbReference type="CDD" id="cd00074">
    <property type="entry name" value="HFD_H2A"/>
    <property type="match status" value="1"/>
</dbReference>
<dbReference type="FunFam" id="1.10.20.10:FF:000008">
    <property type="entry name" value="Histone H2A"/>
    <property type="match status" value="1"/>
</dbReference>
<dbReference type="Gene3D" id="1.10.20.10">
    <property type="entry name" value="Histone, subunit A"/>
    <property type="match status" value="1"/>
</dbReference>
<dbReference type="InterPro" id="IPR009072">
    <property type="entry name" value="Histone-fold"/>
</dbReference>
<dbReference type="InterPro" id="IPR002119">
    <property type="entry name" value="Histone_H2A"/>
</dbReference>
<dbReference type="InterPro" id="IPR007125">
    <property type="entry name" value="Histone_H2A/H2B/H3"/>
</dbReference>
<dbReference type="InterPro" id="IPR032454">
    <property type="entry name" value="Histone_H2A_C"/>
</dbReference>
<dbReference type="InterPro" id="IPR032458">
    <property type="entry name" value="Histone_H2A_CS"/>
</dbReference>
<dbReference type="PANTHER" id="PTHR23430">
    <property type="entry name" value="HISTONE H2A"/>
    <property type="match status" value="1"/>
</dbReference>
<dbReference type="Pfam" id="PF00125">
    <property type="entry name" value="Histone"/>
    <property type="match status" value="1"/>
</dbReference>
<dbReference type="Pfam" id="PF16211">
    <property type="entry name" value="Histone_H2A_C"/>
    <property type="match status" value="1"/>
</dbReference>
<dbReference type="PRINTS" id="PR00620">
    <property type="entry name" value="HISTONEH2A"/>
</dbReference>
<dbReference type="SMART" id="SM00414">
    <property type="entry name" value="H2A"/>
    <property type="match status" value="1"/>
</dbReference>
<dbReference type="SUPFAM" id="SSF47113">
    <property type="entry name" value="Histone-fold"/>
    <property type="match status" value="1"/>
</dbReference>
<dbReference type="PROSITE" id="PS00046">
    <property type="entry name" value="HISTONE_H2A"/>
    <property type="match status" value="1"/>
</dbReference>
<feature type="initiator methionine" description="Removed" evidence="1">
    <location>
        <position position="1"/>
    </location>
</feature>
<feature type="chain" id="PRO_0000055322" description="Histone H2A">
    <location>
        <begin position="2"/>
        <end position="132"/>
    </location>
</feature>
<feature type="region of interest" description="Disordered" evidence="2">
    <location>
        <begin position="1"/>
        <end position="24"/>
    </location>
</feature>
<feature type="short sequence motif" description="[ST]-Q motif">
    <location>
        <begin position="129"/>
        <end position="130"/>
    </location>
</feature>
<feature type="compositionally biased region" description="Gly residues" evidence="2">
    <location>
        <begin position="1"/>
        <end position="10"/>
    </location>
</feature>
<feature type="site" description="Not ubiquitinated" evidence="3">
    <location>
        <position position="120"/>
    </location>
</feature>
<feature type="modified residue" description="N6-acetyllysine" evidence="1">
    <location>
        <position position="5"/>
    </location>
</feature>
<feature type="modified residue" description="N6-acetyllysine" evidence="1">
    <location>
        <position position="9"/>
    </location>
</feature>
<feature type="modified residue" description="N5-methylglutamine" evidence="1">
    <location>
        <position position="106"/>
    </location>
</feature>
<feature type="modified residue" description="Phosphoserine" evidence="1">
    <location>
        <position position="129"/>
    </location>
</feature>
<keyword id="KW-0007">Acetylation</keyword>
<keyword id="KW-0158">Chromosome</keyword>
<keyword id="KW-0227">DNA damage</keyword>
<keyword id="KW-0234">DNA repair</keyword>
<keyword id="KW-0238">DNA-binding</keyword>
<keyword id="KW-0488">Methylation</keyword>
<keyword id="KW-0544">Nucleosome core</keyword>
<keyword id="KW-0539">Nucleus</keyword>
<keyword id="KW-0597">Phosphoprotein</keyword>
<keyword id="KW-1185">Reference proteome</keyword>
<comment type="function">
    <text>Core component of nucleosome which plays a central role in DNA double strand break (DSB) repair. Nucleosomes wrap and compact DNA into chromatin, limiting DNA accessibility to the cellular machineries which require DNA as a template. Histones thereby play a central role in transcription regulation, DNA repair, DNA replication and chromosomal stability. DNA accessibility is regulated via a complex set of post-translational modifications of histones, also called histone code, and nucleosome remodeling.</text>
</comment>
<comment type="subunit">
    <text>The nucleosome is a histone octamer containing two molecules each of H2A, H2B, H3 and H4 assembled in one H3-H4 heterotetramer and two H2A-H2B heterodimers. The octamer wraps approximately 147 bp of DNA.</text>
</comment>
<comment type="subcellular location">
    <subcellularLocation>
        <location>Nucleus</location>
    </subcellularLocation>
    <subcellularLocation>
        <location>Chromosome</location>
    </subcellularLocation>
</comment>
<comment type="domain">
    <text>The [ST]-Q motif constitutes a recognition sequence for kinases from the PI3/PI4-kinase family.</text>
</comment>
<comment type="PTM">
    <text evidence="1">Phosphorylated to form H2AS128ph (gamma-H2A) in response to DNA double-strand breaks (DSBs) generated by exogenous genotoxic agents and by stalled replication forks. Phosphorylation is dependent on the DNA damage checkpoint kinases mec1/ATR and tel1/ATM, spreads on either side of a detected DSB site and may mark the surrounding chromatin for recruitment of proteins required for DNA damage signaling and repair. Gamma-H2A is removed from the DNA prior to the strand invasion-primer extension step of the repair process and subsequently dephosphorylated. Dephosphorylation is necessary for efficient recovery from the DNA damage checkpoint (By similarity).</text>
</comment>
<comment type="PTM">
    <text evidence="1">Acetylated by esa1 to form H2AK4ac and H2AK7ac.</text>
</comment>
<comment type="miscellaneous">
    <text evidence="3">In contrast to vertebrates and insects, its C-terminus is not monoubiquitinated.</text>
</comment>
<comment type="similarity">
    <text evidence="3">Belongs to the histone H2A family.</text>
</comment>
<comment type="caution">
    <text evidence="3">To ensure consistency between histone entries, we follow the 'Brno' nomenclature for histone modifications, with positions referring to those used in the literature for the 'closest' model organism. Due to slight variations in histone sequences between organisms and to the presence of initiator methionine in UniProtKB/Swiss-Prot sequences, the actual positions of modified amino acids in the sequence generally differ. In this entry the following conventions are used: H2AK4ac = acetylated Lys-5; H2AK7ac = acetylated Lys-9; H2AS128ph = phosphorylated Ser-129.</text>
</comment>